<name>EXP30_ORYSJ</name>
<gene>
    <name type="primary">EXPA30</name>
    <name type="synonym">EXP30</name>
    <name type="ordered locus">Os10g0535900</name>
    <name type="ordered locus">LOC_Os10g39110</name>
    <name evidence="6" type="ORF">OsJ_32280</name>
    <name type="ORF">OSJNBb0060I05.13</name>
</gene>
<reference key="1">
    <citation type="journal article" date="2003" name="Science">
        <title>In-depth view of structure, activity, and evolution of rice chromosome 10.</title>
        <authorList>
            <person name="Yu Y."/>
            <person name="Rambo T."/>
            <person name="Currie J."/>
            <person name="Saski C."/>
            <person name="Kim H.-R."/>
            <person name="Collura K."/>
            <person name="Thompson S."/>
            <person name="Simmons J."/>
            <person name="Yang T.-J."/>
            <person name="Nah G."/>
            <person name="Patel A.J."/>
            <person name="Thurmond S."/>
            <person name="Henry D."/>
            <person name="Oates R."/>
            <person name="Palmer M."/>
            <person name="Pries G."/>
            <person name="Gibson J."/>
            <person name="Anderson H."/>
            <person name="Paradkar M."/>
            <person name="Crane L."/>
            <person name="Dale J."/>
            <person name="Carver M.B."/>
            <person name="Wood T."/>
            <person name="Frisch D."/>
            <person name="Engler F."/>
            <person name="Soderlund C."/>
            <person name="Palmer L.E."/>
            <person name="Teytelman L."/>
            <person name="Nascimento L."/>
            <person name="De la Bastide M."/>
            <person name="Spiegel L."/>
            <person name="Ware D."/>
            <person name="O'Shaughnessy A."/>
            <person name="Dike S."/>
            <person name="Dedhia N."/>
            <person name="Preston R."/>
            <person name="Huang E."/>
            <person name="Ferraro K."/>
            <person name="Kuit K."/>
            <person name="Miller B."/>
            <person name="Zutavern T."/>
            <person name="Katzenberger F."/>
            <person name="Muller S."/>
            <person name="Balija V."/>
            <person name="Martienssen R.A."/>
            <person name="Stein L."/>
            <person name="Minx P."/>
            <person name="Johnson D."/>
            <person name="Cordum H."/>
            <person name="Mardis E."/>
            <person name="Cheng Z."/>
            <person name="Jiang J."/>
            <person name="Wilson R."/>
            <person name="McCombie W.R."/>
            <person name="Wing R.A."/>
            <person name="Yuan Q."/>
            <person name="Ouyang S."/>
            <person name="Liu J."/>
            <person name="Jones K.M."/>
            <person name="Gansberger K."/>
            <person name="Moffat K."/>
            <person name="Hill J."/>
            <person name="Tsitrin T."/>
            <person name="Overton L."/>
            <person name="Bera J."/>
            <person name="Kim M."/>
            <person name="Jin S."/>
            <person name="Tallon L."/>
            <person name="Ciecko A."/>
            <person name="Pai G."/>
            <person name="Van Aken S."/>
            <person name="Utterback T."/>
            <person name="Reidmuller S."/>
            <person name="Bormann J."/>
            <person name="Feldblyum T."/>
            <person name="Hsiao J."/>
            <person name="Zismann V."/>
            <person name="Blunt S."/>
            <person name="de Vazeille A.R."/>
            <person name="Shaffer T."/>
            <person name="Koo H."/>
            <person name="Suh B."/>
            <person name="Yang Q."/>
            <person name="Haas B."/>
            <person name="Peterson J."/>
            <person name="Pertea M."/>
            <person name="Volfovsky N."/>
            <person name="Wortman J."/>
            <person name="White O."/>
            <person name="Salzberg S.L."/>
            <person name="Fraser C.M."/>
            <person name="Buell C.R."/>
            <person name="Messing J."/>
            <person name="Song R."/>
            <person name="Fuks G."/>
            <person name="Llaca V."/>
            <person name="Kovchak S."/>
            <person name="Young S."/>
            <person name="Bowers J.E."/>
            <person name="Paterson A.H."/>
            <person name="Johns M.A."/>
            <person name="Mao L."/>
            <person name="Pan H."/>
            <person name="Dean R.A."/>
        </authorList>
    </citation>
    <scope>NUCLEOTIDE SEQUENCE [LARGE SCALE GENOMIC DNA]</scope>
    <source>
        <strain>cv. Nipponbare</strain>
    </source>
</reference>
<reference key="2">
    <citation type="journal article" date="2005" name="Nature">
        <title>The map-based sequence of the rice genome.</title>
        <authorList>
            <consortium name="International rice genome sequencing project (IRGSP)"/>
        </authorList>
    </citation>
    <scope>NUCLEOTIDE SEQUENCE [LARGE SCALE GENOMIC DNA]</scope>
    <source>
        <strain>cv. Nipponbare</strain>
    </source>
</reference>
<reference key="3">
    <citation type="journal article" date="2013" name="Rice">
        <title>Improvement of the Oryza sativa Nipponbare reference genome using next generation sequence and optical map data.</title>
        <authorList>
            <person name="Kawahara Y."/>
            <person name="de la Bastide M."/>
            <person name="Hamilton J.P."/>
            <person name="Kanamori H."/>
            <person name="McCombie W.R."/>
            <person name="Ouyang S."/>
            <person name="Schwartz D.C."/>
            <person name="Tanaka T."/>
            <person name="Wu J."/>
            <person name="Zhou S."/>
            <person name="Childs K.L."/>
            <person name="Davidson R.M."/>
            <person name="Lin H."/>
            <person name="Quesada-Ocampo L."/>
            <person name="Vaillancourt B."/>
            <person name="Sakai H."/>
            <person name="Lee S.S."/>
            <person name="Kim J."/>
            <person name="Numa H."/>
            <person name="Itoh T."/>
            <person name="Buell C.R."/>
            <person name="Matsumoto T."/>
        </authorList>
    </citation>
    <scope>GENOME REANNOTATION</scope>
    <source>
        <strain>cv. Nipponbare</strain>
    </source>
</reference>
<reference key="4">
    <citation type="journal article" date="2005" name="PLoS Biol.">
        <title>The genomes of Oryza sativa: a history of duplications.</title>
        <authorList>
            <person name="Yu J."/>
            <person name="Wang J."/>
            <person name="Lin W."/>
            <person name="Li S."/>
            <person name="Li H."/>
            <person name="Zhou J."/>
            <person name="Ni P."/>
            <person name="Dong W."/>
            <person name="Hu S."/>
            <person name="Zeng C."/>
            <person name="Zhang J."/>
            <person name="Zhang Y."/>
            <person name="Li R."/>
            <person name="Xu Z."/>
            <person name="Li S."/>
            <person name="Li X."/>
            <person name="Zheng H."/>
            <person name="Cong L."/>
            <person name="Lin L."/>
            <person name="Yin J."/>
            <person name="Geng J."/>
            <person name="Li G."/>
            <person name="Shi J."/>
            <person name="Liu J."/>
            <person name="Lv H."/>
            <person name="Li J."/>
            <person name="Wang J."/>
            <person name="Deng Y."/>
            <person name="Ran L."/>
            <person name="Shi X."/>
            <person name="Wang X."/>
            <person name="Wu Q."/>
            <person name="Li C."/>
            <person name="Ren X."/>
            <person name="Wang J."/>
            <person name="Wang X."/>
            <person name="Li D."/>
            <person name="Liu D."/>
            <person name="Zhang X."/>
            <person name="Ji Z."/>
            <person name="Zhao W."/>
            <person name="Sun Y."/>
            <person name="Zhang Z."/>
            <person name="Bao J."/>
            <person name="Han Y."/>
            <person name="Dong L."/>
            <person name="Ji J."/>
            <person name="Chen P."/>
            <person name="Wu S."/>
            <person name="Liu J."/>
            <person name="Xiao Y."/>
            <person name="Bu D."/>
            <person name="Tan J."/>
            <person name="Yang L."/>
            <person name="Ye C."/>
            <person name="Zhang J."/>
            <person name="Xu J."/>
            <person name="Zhou Y."/>
            <person name="Yu Y."/>
            <person name="Zhang B."/>
            <person name="Zhuang S."/>
            <person name="Wei H."/>
            <person name="Liu B."/>
            <person name="Lei M."/>
            <person name="Yu H."/>
            <person name="Li Y."/>
            <person name="Xu H."/>
            <person name="Wei S."/>
            <person name="He X."/>
            <person name="Fang L."/>
            <person name="Zhang Z."/>
            <person name="Zhang Y."/>
            <person name="Huang X."/>
            <person name="Su Z."/>
            <person name="Tong W."/>
            <person name="Li J."/>
            <person name="Tong Z."/>
            <person name="Li S."/>
            <person name="Ye J."/>
            <person name="Wang L."/>
            <person name="Fang L."/>
            <person name="Lei T."/>
            <person name="Chen C.-S."/>
            <person name="Chen H.-C."/>
            <person name="Xu Z."/>
            <person name="Li H."/>
            <person name="Huang H."/>
            <person name="Zhang F."/>
            <person name="Xu H."/>
            <person name="Li N."/>
            <person name="Zhao C."/>
            <person name="Li S."/>
            <person name="Dong L."/>
            <person name="Huang Y."/>
            <person name="Li L."/>
            <person name="Xi Y."/>
            <person name="Qi Q."/>
            <person name="Li W."/>
            <person name="Zhang B."/>
            <person name="Hu W."/>
            <person name="Zhang Y."/>
            <person name="Tian X."/>
            <person name="Jiao Y."/>
            <person name="Liang X."/>
            <person name="Jin J."/>
            <person name="Gao L."/>
            <person name="Zheng W."/>
            <person name="Hao B."/>
            <person name="Liu S.-M."/>
            <person name="Wang W."/>
            <person name="Yuan L."/>
            <person name="Cao M."/>
            <person name="McDermott J."/>
            <person name="Samudrala R."/>
            <person name="Wang J."/>
            <person name="Wong G.K.-S."/>
            <person name="Yang H."/>
        </authorList>
    </citation>
    <scope>NUCLEOTIDE SEQUENCE [LARGE SCALE GENOMIC DNA]</scope>
    <source>
        <strain>cv. Nipponbare</strain>
    </source>
</reference>
<reference key="5">
    <citation type="journal article" date="2004" name="Plant Mol. Biol.">
        <title>Nomenclature for members of the expansin superfamily of genes and proteins.</title>
        <authorList>
            <person name="Kende H."/>
            <person name="Bradford K.J."/>
            <person name="Brummell D.A."/>
            <person name="Cho H.-T."/>
            <person name="Cosgrove D.J."/>
            <person name="Fleming A.J."/>
            <person name="Gehring C."/>
            <person name="Lee Y."/>
            <person name="McQueen-Mason S.J."/>
            <person name="Rose J.K.C."/>
            <person name="Voesenek L.A.C."/>
        </authorList>
    </citation>
    <scope>NOMENCLATURE</scope>
</reference>
<sequence length="266" mass="27931">MAAASSTTATTAILAAVIISLAGAATTVDAKFRAMQWTPAHATFYGDETASETMGGACGYGNLYASGYGTDTAALSTTLFKDGYGCGTCYQMRCVGTASCYRGSPAITVTATNLCPPNWAEDPDRGGGGWCNPPRAHFDLSKPAFMRMADWRAGIVPVMYRRVPCARAGGLRFALQGNPYWLLAYVMNVAGAGDVGDMWVKAGGGGGWVRMSHNWGASYQAFAQLGGQALSFKVTSYTTGQTILAAGVTPASWCFGLTYQARVNFS</sequence>
<evidence type="ECO:0000250" key="1"/>
<evidence type="ECO:0000255" key="2"/>
<evidence type="ECO:0000255" key="3">
    <source>
        <dbReference type="PROSITE-ProRule" id="PRU00078"/>
    </source>
</evidence>
<evidence type="ECO:0000255" key="4">
    <source>
        <dbReference type="PROSITE-ProRule" id="PRU00079"/>
    </source>
</evidence>
<evidence type="ECO:0000305" key="5"/>
<evidence type="ECO:0000312" key="6">
    <source>
        <dbReference type="EMBL" id="EAZ16807.1"/>
    </source>
</evidence>
<protein>
    <recommendedName>
        <fullName>Putative expansin-A30</fullName>
    </recommendedName>
    <alternativeName>
        <fullName>Alpha-expansin-30</fullName>
    </alternativeName>
    <alternativeName>
        <fullName>OsEXP30</fullName>
    </alternativeName>
    <alternativeName>
        <fullName>OsEXPA30</fullName>
    </alternativeName>
    <alternativeName>
        <fullName>OsaEXPa1.32</fullName>
    </alternativeName>
</protein>
<proteinExistence type="inferred from homology"/>
<keyword id="KW-0134">Cell wall</keyword>
<keyword id="KW-0961">Cell wall biogenesis/degradation</keyword>
<keyword id="KW-0472">Membrane</keyword>
<keyword id="KW-1185">Reference proteome</keyword>
<keyword id="KW-0964">Secreted</keyword>
<keyword id="KW-0732">Signal</keyword>
<organism>
    <name type="scientific">Oryza sativa subsp. japonica</name>
    <name type="common">Rice</name>
    <dbReference type="NCBI Taxonomy" id="39947"/>
    <lineage>
        <taxon>Eukaryota</taxon>
        <taxon>Viridiplantae</taxon>
        <taxon>Streptophyta</taxon>
        <taxon>Embryophyta</taxon>
        <taxon>Tracheophyta</taxon>
        <taxon>Spermatophyta</taxon>
        <taxon>Magnoliopsida</taxon>
        <taxon>Liliopsida</taxon>
        <taxon>Poales</taxon>
        <taxon>Poaceae</taxon>
        <taxon>BOP clade</taxon>
        <taxon>Oryzoideae</taxon>
        <taxon>Oryzeae</taxon>
        <taxon>Oryzinae</taxon>
        <taxon>Oryza</taxon>
        <taxon>Oryza sativa</taxon>
    </lineage>
</organism>
<accession>Q8W2X8</accession>
<accession>A3C6U4</accession>
<accession>Q7XCN4</accession>
<comment type="function">
    <text evidence="1">May cause loosening and extension of plant cell walls by disrupting non-covalent bonding between cellulose microfibrils and matrix glucans. No enzymatic activity has been found. May be required for rapid internodal elongation in deepwater rice during submergence (By similarity).</text>
</comment>
<comment type="subcellular location">
    <subcellularLocation>
        <location evidence="1">Secreted</location>
        <location evidence="1">Cell wall</location>
    </subcellularLocation>
    <subcellularLocation>
        <location evidence="1">Membrane</location>
        <topology evidence="1">Peripheral membrane protein</topology>
    </subcellularLocation>
</comment>
<comment type="similarity">
    <text evidence="5">Belongs to the expansin family. Expansin A subfamily.</text>
</comment>
<comment type="online information" name="EXPANSIN homepage">
    <link uri="https://www.dept.psu.edu/biology/groups/expansins/index.htm"/>
</comment>
<feature type="signal peptide" evidence="2">
    <location>
        <begin position="1"/>
        <end position="24"/>
    </location>
</feature>
<feature type="chain" id="PRO_0000252009" description="Putative expansin-A30">
    <location>
        <begin position="25"/>
        <end position="266"/>
    </location>
</feature>
<feature type="domain" description="Expansin-like EG45" evidence="4">
    <location>
        <begin position="55"/>
        <end position="170"/>
    </location>
</feature>
<feature type="domain" description="Expansin-like CBD" evidence="3">
    <location>
        <begin position="180"/>
        <end position="261"/>
    </location>
</feature>
<dbReference type="EMBL" id="AC092697">
    <property type="protein sequence ID" value="AAL58125.1"/>
    <property type="molecule type" value="Genomic_DNA"/>
</dbReference>
<dbReference type="EMBL" id="DP000086">
    <property type="protein sequence ID" value="AAP54808.1"/>
    <property type="molecule type" value="Genomic_DNA"/>
</dbReference>
<dbReference type="EMBL" id="AP014966">
    <property type="protein sequence ID" value="BAT11819.1"/>
    <property type="molecule type" value="Genomic_DNA"/>
</dbReference>
<dbReference type="EMBL" id="CM000147">
    <property type="protein sequence ID" value="EAZ16807.1"/>
    <property type="molecule type" value="Genomic_DNA"/>
</dbReference>
<dbReference type="SMR" id="Q8W2X8"/>
<dbReference type="STRING" id="39947.Q8W2X8"/>
<dbReference type="PaxDb" id="39947-Q8W2X8"/>
<dbReference type="EnsemblPlants" id="Os10t0535900-00">
    <property type="protein sequence ID" value="Os10t0535900-00"/>
    <property type="gene ID" value="Os10g0535900"/>
</dbReference>
<dbReference type="GeneID" id="107277540"/>
<dbReference type="Gramene" id="Os10t0535900-00">
    <property type="protein sequence ID" value="Os10t0535900-00"/>
    <property type="gene ID" value="Os10g0535900"/>
</dbReference>
<dbReference type="KEGG" id="osa:107277540"/>
<dbReference type="eggNOG" id="ENOG502QR2X">
    <property type="taxonomic scope" value="Eukaryota"/>
</dbReference>
<dbReference type="HOGENOM" id="CLU_027462_0_0_1"/>
<dbReference type="InParanoid" id="Q8W2X8"/>
<dbReference type="OMA" id="MSMSHNW"/>
<dbReference type="OrthoDB" id="5823761at2759"/>
<dbReference type="Proteomes" id="UP000000763">
    <property type="component" value="Chromosome 10"/>
</dbReference>
<dbReference type="Proteomes" id="UP000007752">
    <property type="component" value="Chromosome 10"/>
</dbReference>
<dbReference type="Proteomes" id="UP000059680">
    <property type="component" value="Chromosome 10"/>
</dbReference>
<dbReference type="GO" id="GO:0005576">
    <property type="term" value="C:extracellular region"/>
    <property type="evidence" value="ECO:0007669"/>
    <property type="project" value="UniProtKB-KW"/>
</dbReference>
<dbReference type="GO" id="GO:0016020">
    <property type="term" value="C:membrane"/>
    <property type="evidence" value="ECO:0007669"/>
    <property type="project" value="UniProtKB-SubCell"/>
</dbReference>
<dbReference type="GO" id="GO:0009828">
    <property type="term" value="P:plant-type cell wall loosening"/>
    <property type="evidence" value="ECO:0000250"/>
    <property type="project" value="UniProtKB"/>
</dbReference>
<dbReference type="CDD" id="cd22274">
    <property type="entry name" value="DPBB_EXPA_N"/>
    <property type="match status" value="1"/>
</dbReference>
<dbReference type="Gene3D" id="2.60.40.760">
    <property type="entry name" value="Expansin, cellulose-binding-like domain"/>
    <property type="match status" value="1"/>
</dbReference>
<dbReference type="Gene3D" id="2.40.40.10">
    <property type="entry name" value="RlpA-like domain"/>
    <property type="match status" value="1"/>
</dbReference>
<dbReference type="InterPro" id="IPR007118">
    <property type="entry name" value="Expan_Lol_pI"/>
</dbReference>
<dbReference type="InterPro" id="IPR002963">
    <property type="entry name" value="Expansin"/>
</dbReference>
<dbReference type="InterPro" id="IPR007112">
    <property type="entry name" value="Expansin/allergen_DPBB_dom"/>
</dbReference>
<dbReference type="InterPro" id="IPR007117">
    <property type="entry name" value="Expansin_CBD"/>
</dbReference>
<dbReference type="InterPro" id="IPR036749">
    <property type="entry name" value="Expansin_CBD_sf"/>
</dbReference>
<dbReference type="InterPro" id="IPR009009">
    <property type="entry name" value="RlpA-like_DPBB"/>
</dbReference>
<dbReference type="InterPro" id="IPR036908">
    <property type="entry name" value="RlpA-like_sf"/>
</dbReference>
<dbReference type="PANTHER" id="PTHR31867">
    <property type="entry name" value="EXPANSIN-A15"/>
    <property type="match status" value="1"/>
</dbReference>
<dbReference type="Pfam" id="PF03330">
    <property type="entry name" value="DPBB_1"/>
    <property type="match status" value="1"/>
</dbReference>
<dbReference type="Pfam" id="PF01357">
    <property type="entry name" value="Expansin_C"/>
    <property type="match status" value="1"/>
</dbReference>
<dbReference type="PRINTS" id="PR01226">
    <property type="entry name" value="EXPANSIN"/>
</dbReference>
<dbReference type="PRINTS" id="PR01225">
    <property type="entry name" value="EXPANSNFAMLY"/>
</dbReference>
<dbReference type="SMART" id="SM00837">
    <property type="entry name" value="DPBB_1"/>
    <property type="match status" value="1"/>
</dbReference>
<dbReference type="SUPFAM" id="SSF50685">
    <property type="entry name" value="Barwin-like endoglucanases"/>
    <property type="match status" value="1"/>
</dbReference>
<dbReference type="SUPFAM" id="SSF49590">
    <property type="entry name" value="PHL pollen allergen"/>
    <property type="match status" value="1"/>
</dbReference>
<dbReference type="PROSITE" id="PS50843">
    <property type="entry name" value="EXPANSIN_CBD"/>
    <property type="match status" value="1"/>
</dbReference>
<dbReference type="PROSITE" id="PS50842">
    <property type="entry name" value="EXPANSIN_EG45"/>
    <property type="match status" value="1"/>
</dbReference>